<keyword id="KW-0002">3D-structure</keyword>
<keyword id="KW-0903">Direct protein sequencing</keyword>
<keyword id="KW-0349">Heme</keyword>
<keyword id="KW-0408">Iron</keyword>
<keyword id="KW-0479">Metal-binding</keyword>
<keyword id="KW-0561">Oxygen transport</keyword>
<keyword id="KW-1185">Reference proteome</keyword>
<keyword id="KW-0813">Transport</keyword>
<feature type="initiator methionine" description="Removed" evidence="2">
    <location>
        <position position="1"/>
    </location>
</feature>
<feature type="chain" id="PRO_0000052925" description="Hemoglobin subunit beta">
    <location>
        <begin position="2"/>
        <end position="147"/>
    </location>
</feature>
<feature type="domain" description="Globin" evidence="1">
    <location>
        <begin position="3"/>
        <end position="147"/>
    </location>
</feature>
<feature type="binding site" description="distal binding residue">
    <location>
        <position position="64"/>
    </location>
    <ligand>
        <name>heme b</name>
        <dbReference type="ChEBI" id="CHEBI:60344"/>
    </ligand>
    <ligandPart>
        <name>Fe</name>
        <dbReference type="ChEBI" id="CHEBI:18248"/>
    </ligandPart>
</feature>
<feature type="binding site" description="proximal binding residue">
    <location>
        <position position="93"/>
    </location>
    <ligand>
        <name>heme b</name>
        <dbReference type="ChEBI" id="CHEBI:60344"/>
    </ligand>
    <ligandPart>
        <name>Fe</name>
        <dbReference type="ChEBI" id="CHEBI:18248"/>
    </ligandPart>
</feature>
<feature type="sequence variant" evidence="3">
    <original>T</original>
    <variation>S</variation>
    <location>
        <position position="70"/>
    </location>
</feature>
<feature type="helix" evidence="4">
    <location>
        <begin position="6"/>
        <end position="16"/>
    </location>
</feature>
<feature type="helix" evidence="4">
    <location>
        <begin position="21"/>
        <end position="35"/>
    </location>
</feature>
<feature type="helix" evidence="4">
    <location>
        <begin position="37"/>
        <end position="46"/>
    </location>
</feature>
<feature type="helix" evidence="4">
    <location>
        <begin position="52"/>
        <end position="57"/>
    </location>
</feature>
<feature type="helix" evidence="4">
    <location>
        <begin position="59"/>
        <end position="76"/>
    </location>
</feature>
<feature type="helix" evidence="4">
    <location>
        <begin position="82"/>
        <end position="85"/>
    </location>
</feature>
<feature type="helix" evidence="4">
    <location>
        <begin position="87"/>
        <end position="94"/>
    </location>
</feature>
<feature type="turn" evidence="4">
    <location>
        <begin position="95"/>
        <end position="97"/>
    </location>
</feature>
<feature type="helix" evidence="4">
    <location>
        <begin position="101"/>
        <end position="119"/>
    </location>
</feature>
<feature type="helix" evidence="4">
    <location>
        <begin position="120"/>
        <end position="122"/>
    </location>
</feature>
<feature type="helix" evidence="4">
    <location>
        <begin position="125"/>
        <end position="142"/>
    </location>
</feature>
<organism>
    <name type="scientific">Gallus gallus</name>
    <name type="common">Chicken</name>
    <dbReference type="NCBI Taxonomy" id="9031"/>
    <lineage>
        <taxon>Eukaryota</taxon>
        <taxon>Metazoa</taxon>
        <taxon>Chordata</taxon>
        <taxon>Craniata</taxon>
        <taxon>Vertebrata</taxon>
        <taxon>Euteleostomi</taxon>
        <taxon>Archelosauria</taxon>
        <taxon>Archosauria</taxon>
        <taxon>Dinosauria</taxon>
        <taxon>Saurischia</taxon>
        <taxon>Theropoda</taxon>
        <taxon>Coelurosauria</taxon>
        <taxon>Aves</taxon>
        <taxon>Neognathae</taxon>
        <taxon>Galloanserae</taxon>
        <taxon>Galliformes</taxon>
        <taxon>Phasianidae</taxon>
        <taxon>Phasianinae</taxon>
        <taxon>Gallus</taxon>
    </lineage>
</organism>
<accession>P02112</accession>
<accession>Q90594</accession>
<accession>Q90863</accession>
<accession>Q90938</accession>
<evidence type="ECO:0000255" key="1">
    <source>
        <dbReference type="PROSITE-ProRule" id="PRU00238"/>
    </source>
</evidence>
<evidence type="ECO:0000269" key="2">
    <source>
    </source>
</evidence>
<evidence type="ECO:0000269" key="3">
    <source ref="4"/>
</evidence>
<evidence type="ECO:0007829" key="4">
    <source>
        <dbReference type="PDB" id="1HBR"/>
    </source>
</evidence>
<comment type="function">
    <text>Involved in oxygen transport from the lung to the various peripheral tissues. The beta chain is a component of adult hemoglobin A and D.</text>
</comment>
<comment type="subunit">
    <text>Heterotetramer of 2 alpha (or alpha-D) and 2 beta chains.</text>
</comment>
<comment type="tissue specificity">
    <text>Red blood cells.</text>
</comment>
<comment type="similarity">
    <text evidence="1">Belongs to the globin family.</text>
</comment>
<reference key="1">
    <citation type="journal article" date="1983" name="J. Biol. Chem.">
        <title>Analysis of the adult chicken beta-globin gene. Nucleotide sequence of the locus, microheterogeneity at the 5'-end of beta-globin mRNA, and aberrant nuclear RNA species.</title>
        <authorList>
            <person name="Dolan M."/>
            <person name="Dodgson J.B."/>
            <person name="Engel J.D."/>
        </authorList>
    </citation>
    <scope>NUCLEOTIDE SEQUENCE</scope>
</reference>
<reference key="2">
    <citation type="journal article" date="1979" name="Nucleic Acids Res.">
        <title>Molecular cloning and sequence analysis of adult chicken betal globin cDNA.</title>
        <authorList>
            <person name="Richards R.I."/>
            <person name="Shine J."/>
            <person name="Ullrich A."/>
            <person name="Wells J.R.E."/>
            <person name="Goodman H.M."/>
        </authorList>
    </citation>
    <scope>NUCLEOTIDE SEQUENCE [MRNA]</scope>
</reference>
<reference key="3">
    <citation type="journal article" date="1993" name="Genomics">
        <title>Primary sequence, evolution, and repetitive elements of the Gallus gallus (chicken) beta-globin cluster.</title>
        <authorList>
            <person name="Reitman M."/>
            <person name="Grasso J.A."/>
            <person name="Blumenthal R."/>
            <person name="Lewit P."/>
        </authorList>
    </citation>
    <scope>NUCLEOTIDE SEQUENCE [GENOMIC DNA]</scope>
</reference>
<reference key="4">
    <citation type="submission" date="1992-01" db="EMBL/GenBank/DDBJ databases">
        <title>Mutant hemoglobin (Beta chain thr 69--&gt;ser) with high oxygen affinity from Gallus gallus native to the altiplano of Peru.</title>
        <authorList>
            <person name="Larrick J.W."/>
            <person name="Espinoza D.O."/>
        </authorList>
    </citation>
    <scope>NUCLEOTIDE SEQUENCE</scope>
    <scope>VARIANT SER-70</scope>
</reference>
<reference key="5">
    <citation type="journal article" date="1981" name="Biochemistry">
        <title>5' domain and nucleotide sequence of an adult chicken chromosomal beta-globin gene.</title>
        <authorList>
            <person name="Day L.E."/>
            <person name="Hirst A.J."/>
            <person name="Lai E.C."/>
            <person name="Mace M.J."/>
            <person name="Woo S.L."/>
        </authorList>
    </citation>
    <scope>NUCLEOTIDE SEQUENCE [GENOMIC DNA] OF 1-13</scope>
</reference>
<reference key="6">
    <citation type="journal article" date="1981" name="Gene">
        <title>Cloning of chicken globin cDNA in bacterial plasmids.</title>
        <authorList>
            <person name="Padayatty J."/>
            <person name="Cummings I."/>
            <person name="Manske C.L."/>
            <person name="Higuchi R."/>
            <person name="Woo S."/>
            <person name="Salser W."/>
        </authorList>
    </citation>
    <scope>NUCLEOTIDE SEQUENCE [MRNA] OF 30-44</scope>
</reference>
<reference key="7">
    <citation type="journal article" date="1975" name="J. Biochem.">
        <title>Peptic peptides from the beta polypeptide chain of AII component of chicken hemoglobin.</title>
        <authorList>
            <person name="Maita T."/>
            <person name="Mizuno K."/>
            <person name="Matsuda G."/>
        </authorList>
    </citation>
    <scope>PROTEIN SEQUENCE OF 2-147</scope>
</reference>
<reference key="8">
    <citation type="journal article" date="1999" name="J. Biol. Chem.">
        <title>The structural and functional analysis of the hemoglobin D component from chicken.</title>
        <authorList>
            <person name="Knapp J.E."/>
            <person name="Oliveira M.A."/>
            <person name="Xie Q."/>
            <person name="Ernst S.R."/>
            <person name="Riggs A.F."/>
            <person name="Hackert M.L."/>
        </authorList>
    </citation>
    <scope>X-RAY CRYSTALLOGRAPHY (2.3 ANGSTROMS)</scope>
</reference>
<gene>
    <name type="primary">HBB</name>
</gene>
<sequence>MVHWTAEEKQLITGLWGKVNVAECGAEALARLLIVYPWTQRFFASFGNLSSPTAILGNPMVRAHGKKVLTSFGDAVKNLDNIKNTFSQLSELHCDKLHVDPENFRLLGDILIIVLAAHFSKDFTPECQAAWQKLVRVVAHALARKYH</sequence>
<dbReference type="EMBL" id="V00409">
    <property type="protein sequence ID" value="CAA23700.1"/>
    <property type="molecule type" value="Genomic_DNA"/>
</dbReference>
<dbReference type="EMBL" id="J00860">
    <property type="protein sequence ID" value="AAA48805.1"/>
    <property type="molecule type" value="mRNA"/>
</dbReference>
<dbReference type="EMBL" id="L17432">
    <property type="protein sequence ID" value="AAD03347.1"/>
    <property type="molecule type" value="Genomic_DNA"/>
</dbReference>
<dbReference type="EMBL" id="J00857">
    <property type="protein sequence ID" value="AAA48804.1"/>
    <property type="molecule type" value="Genomic_DNA"/>
</dbReference>
<dbReference type="EMBL" id="M10380">
    <property type="protein sequence ID" value="AAA48803.1"/>
    <property type="molecule type" value="mRNA"/>
</dbReference>
<dbReference type="EMBL" id="M73995">
    <property type="protein sequence ID" value="AAA48996.1"/>
    <property type="molecule type" value="mRNA"/>
</dbReference>
<dbReference type="PIR" id="I50249">
    <property type="entry name" value="HBCH"/>
</dbReference>
<dbReference type="RefSeq" id="XP_015156250.1">
    <property type="nucleotide sequence ID" value="XM_015300764.1"/>
</dbReference>
<dbReference type="PDB" id="1HBR">
    <property type="method" value="X-ray"/>
    <property type="resolution" value="2.30 A"/>
    <property type="chains" value="B/D=2-147"/>
</dbReference>
<dbReference type="PDBsum" id="1HBR"/>
<dbReference type="SMR" id="P02112"/>
<dbReference type="BioGRID" id="676732">
    <property type="interactions" value="1"/>
</dbReference>
<dbReference type="FunCoup" id="P02112">
    <property type="interactions" value="66"/>
</dbReference>
<dbReference type="IntAct" id="P02112">
    <property type="interactions" value="1"/>
</dbReference>
<dbReference type="STRING" id="9031.ENSGALP00000035593"/>
<dbReference type="Allergome" id="8240">
    <property type="allergen name" value="Gal d HG"/>
</dbReference>
<dbReference type="PaxDb" id="9031-ENSGALP00000035593"/>
<dbReference type="Ensembl" id="ENSGALT00010008945.1">
    <property type="protein sequence ID" value="ENSGALP00010005277.1"/>
    <property type="gene ID" value="ENSGALG00010003868.1"/>
</dbReference>
<dbReference type="KEGG" id="gga:396485"/>
<dbReference type="CTD" id="396485"/>
<dbReference type="VEuPathDB" id="HostDB:geneid_396485"/>
<dbReference type="eggNOG" id="KOG3378">
    <property type="taxonomic scope" value="Eukaryota"/>
</dbReference>
<dbReference type="GeneTree" id="ENSGT00940000157809"/>
<dbReference type="HOGENOM" id="CLU_003827_10_0_1"/>
<dbReference type="InParanoid" id="P02112"/>
<dbReference type="OMA" id="ICGNPQV"/>
<dbReference type="OrthoDB" id="9886081at2759"/>
<dbReference type="PhylomeDB" id="P02112"/>
<dbReference type="Reactome" id="R-GGA-1237044">
    <property type="pathway name" value="Erythrocytes take up carbon dioxide and release oxygen"/>
</dbReference>
<dbReference type="Reactome" id="R-GGA-1247673">
    <property type="pathway name" value="Erythrocytes take up oxygen and release carbon dioxide"/>
</dbReference>
<dbReference type="Reactome" id="R-GGA-2168880">
    <property type="pathway name" value="Scavenging of heme from plasma"/>
</dbReference>
<dbReference type="Reactome" id="R-GGA-6798695">
    <property type="pathway name" value="Neutrophil degranulation"/>
</dbReference>
<dbReference type="Reactome" id="R-GGA-9707564">
    <property type="pathway name" value="Cytoprotection by HMOX1"/>
</dbReference>
<dbReference type="Reactome" id="R-GGA-9707616">
    <property type="pathway name" value="Heme signaling"/>
</dbReference>
<dbReference type="EvolutionaryTrace" id="P02112"/>
<dbReference type="PRO" id="PR:P02112"/>
<dbReference type="Proteomes" id="UP000000539">
    <property type="component" value="Chromosome 1"/>
</dbReference>
<dbReference type="Bgee" id="ENSGALG00000047152">
    <property type="expression patterns" value="Expressed in lung and 12 other cell types or tissues"/>
</dbReference>
<dbReference type="GO" id="GO:0005615">
    <property type="term" value="C:extracellular space"/>
    <property type="evidence" value="ECO:0000314"/>
    <property type="project" value="AgBase"/>
</dbReference>
<dbReference type="GO" id="GO:0031838">
    <property type="term" value="C:haptoglobin-hemoglobin complex"/>
    <property type="evidence" value="ECO:0000318"/>
    <property type="project" value="GO_Central"/>
</dbReference>
<dbReference type="GO" id="GO:0005833">
    <property type="term" value="C:hemoglobin complex"/>
    <property type="evidence" value="ECO:0000318"/>
    <property type="project" value="GO_Central"/>
</dbReference>
<dbReference type="GO" id="GO:0020037">
    <property type="term" value="F:heme binding"/>
    <property type="evidence" value="ECO:0000318"/>
    <property type="project" value="GO_Central"/>
</dbReference>
<dbReference type="GO" id="GO:0030492">
    <property type="term" value="F:hemoglobin binding"/>
    <property type="evidence" value="ECO:0000250"/>
    <property type="project" value="AgBase"/>
</dbReference>
<dbReference type="GO" id="GO:0046872">
    <property type="term" value="F:metal ion binding"/>
    <property type="evidence" value="ECO:0007669"/>
    <property type="project" value="UniProtKB-KW"/>
</dbReference>
<dbReference type="GO" id="GO:0019825">
    <property type="term" value="F:oxygen binding"/>
    <property type="evidence" value="ECO:0000250"/>
    <property type="project" value="AgBase"/>
</dbReference>
<dbReference type="GO" id="GO:0005344">
    <property type="term" value="F:oxygen carrier activity"/>
    <property type="evidence" value="ECO:0000318"/>
    <property type="project" value="GO_Central"/>
</dbReference>
<dbReference type="GO" id="GO:0098869">
    <property type="term" value="P:cellular oxidant detoxification"/>
    <property type="evidence" value="ECO:0007669"/>
    <property type="project" value="GOC"/>
</dbReference>
<dbReference type="GO" id="GO:0042744">
    <property type="term" value="P:hydrogen peroxide catabolic process"/>
    <property type="evidence" value="ECO:0000318"/>
    <property type="project" value="GO_Central"/>
</dbReference>
<dbReference type="CDD" id="cd08925">
    <property type="entry name" value="Hb-beta-like"/>
    <property type="match status" value="1"/>
</dbReference>
<dbReference type="FunFam" id="1.10.490.10:FF:000001">
    <property type="entry name" value="Hemoglobin subunit beta"/>
    <property type="match status" value="1"/>
</dbReference>
<dbReference type="Gene3D" id="1.10.490.10">
    <property type="entry name" value="Globins"/>
    <property type="match status" value="1"/>
</dbReference>
<dbReference type="InterPro" id="IPR000971">
    <property type="entry name" value="Globin"/>
</dbReference>
<dbReference type="InterPro" id="IPR009050">
    <property type="entry name" value="Globin-like_sf"/>
</dbReference>
<dbReference type="InterPro" id="IPR012292">
    <property type="entry name" value="Globin/Proto"/>
</dbReference>
<dbReference type="InterPro" id="IPR002337">
    <property type="entry name" value="Hemoglobin_b"/>
</dbReference>
<dbReference type="InterPro" id="IPR050056">
    <property type="entry name" value="Hemoglobin_oxygen_transport"/>
</dbReference>
<dbReference type="PANTHER" id="PTHR11442">
    <property type="entry name" value="HEMOGLOBIN FAMILY MEMBER"/>
    <property type="match status" value="1"/>
</dbReference>
<dbReference type="PANTHER" id="PTHR11442:SF7">
    <property type="entry name" value="HEMOGLOBIN SUBUNIT EPSILON"/>
    <property type="match status" value="1"/>
</dbReference>
<dbReference type="Pfam" id="PF00042">
    <property type="entry name" value="Globin"/>
    <property type="match status" value="1"/>
</dbReference>
<dbReference type="PRINTS" id="PR00814">
    <property type="entry name" value="BETAHAEM"/>
</dbReference>
<dbReference type="SUPFAM" id="SSF46458">
    <property type="entry name" value="Globin-like"/>
    <property type="match status" value="1"/>
</dbReference>
<dbReference type="PROSITE" id="PS01033">
    <property type="entry name" value="GLOBIN"/>
    <property type="match status" value="1"/>
</dbReference>
<proteinExistence type="evidence at protein level"/>
<protein>
    <recommendedName>
        <fullName>Hemoglobin subunit beta</fullName>
    </recommendedName>
    <alternativeName>
        <fullName>Beta-globin</fullName>
    </alternativeName>
    <alternativeName>
        <fullName>Hemoglobin beta chain</fullName>
    </alternativeName>
</protein>
<name>HBB_CHICK</name>